<name>EX7L_STRTD</name>
<organism>
    <name type="scientific">Streptococcus thermophilus (strain ATCC BAA-491 / LMD-9)</name>
    <dbReference type="NCBI Taxonomy" id="322159"/>
    <lineage>
        <taxon>Bacteria</taxon>
        <taxon>Bacillati</taxon>
        <taxon>Bacillota</taxon>
        <taxon>Bacilli</taxon>
        <taxon>Lactobacillales</taxon>
        <taxon>Streptococcaceae</taxon>
        <taxon>Streptococcus</taxon>
    </lineage>
</organism>
<accession>Q03K98</accession>
<sequence length="446" mass="50821">MSDYLSVTSLTKYLKMKFDRDPYLERVYLTGQVSNYRRRPSHQYFSLKDEGAVIQATIWAGVFKKIGFDLEEGMKINVVGRVQIYEPSGSYSLIIEKAEPDGIGALALQFEQLRKKLTAEGYFDDRHKQPLPNFVKKIGVITSPSGAVIRDIITTVSRRFPGVEILLFPTKVQGDGAAQEIVENIQKANQREDLDLLIVGRGGGSIEDLWAFNEEIVVQSIFESRLPVISSVGHETDTTLADFVADRRAATPTAAAELATPISKADTLAWIRERQNRAYQACLRRIQYNQERLAKLSQSVVFRQPERLYDGYLQKLDRLTTRLETFMSQDFERKQKSAEFLRQRLHGLNLSTRVKNYQDRRESLQRLLVTTTKNTINGNRVRLEKAQDALLSLDTSRIVARGYAIVNKNDKPLTTIKDITEGEQLTIQMRDGQLEVEVKNVNEKNI</sequence>
<feature type="chain" id="PRO_0000303825" description="Exodeoxyribonuclease 7 large subunit">
    <location>
        <begin position="1"/>
        <end position="446"/>
    </location>
</feature>
<dbReference type="EC" id="3.1.11.6" evidence="1"/>
<dbReference type="EMBL" id="CP000419">
    <property type="protein sequence ID" value="ABJ66374.1"/>
    <property type="molecule type" value="Genomic_DNA"/>
</dbReference>
<dbReference type="RefSeq" id="WP_011226129.1">
    <property type="nucleotide sequence ID" value="NC_008532.1"/>
</dbReference>
<dbReference type="SMR" id="Q03K98"/>
<dbReference type="GeneID" id="66899010"/>
<dbReference type="KEGG" id="ste:STER_1184"/>
<dbReference type="HOGENOM" id="CLU_023625_3_1_9"/>
<dbReference type="GO" id="GO:0005737">
    <property type="term" value="C:cytoplasm"/>
    <property type="evidence" value="ECO:0007669"/>
    <property type="project" value="UniProtKB-SubCell"/>
</dbReference>
<dbReference type="GO" id="GO:0009318">
    <property type="term" value="C:exodeoxyribonuclease VII complex"/>
    <property type="evidence" value="ECO:0007669"/>
    <property type="project" value="InterPro"/>
</dbReference>
<dbReference type="GO" id="GO:0008855">
    <property type="term" value="F:exodeoxyribonuclease VII activity"/>
    <property type="evidence" value="ECO:0007669"/>
    <property type="project" value="UniProtKB-UniRule"/>
</dbReference>
<dbReference type="GO" id="GO:0003676">
    <property type="term" value="F:nucleic acid binding"/>
    <property type="evidence" value="ECO:0007669"/>
    <property type="project" value="InterPro"/>
</dbReference>
<dbReference type="GO" id="GO:0006308">
    <property type="term" value="P:DNA catabolic process"/>
    <property type="evidence" value="ECO:0007669"/>
    <property type="project" value="UniProtKB-UniRule"/>
</dbReference>
<dbReference type="CDD" id="cd04489">
    <property type="entry name" value="ExoVII_LU_OBF"/>
    <property type="match status" value="1"/>
</dbReference>
<dbReference type="HAMAP" id="MF_00378">
    <property type="entry name" value="Exonuc_7_L"/>
    <property type="match status" value="1"/>
</dbReference>
<dbReference type="InterPro" id="IPR003753">
    <property type="entry name" value="Exonuc_VII_L"/>
</dbReference>
<dbReference type="InterPro" id="IPR020579">
    <property type="entry name" value="Exonuc_VII_lsu_C"/>
</dbReference>
<dbReference type="InterPro" id="IPR025824">
    <property type="entry name" value="OB-fold_nuc-bd_dom"/>
</dbReference>
<dbReference type="NCBIfam" id="TIGR00237">
    <property type="entry name" value="xseA"/>
    <property type="match status" value="1"/>
</dbReference>
<dbReference type="PANTHER" id="PTHR30008">
    <property type="entry name" value="EXODEOXYRIBONUCLEASE 7 LARGE SUBUNIT"/>
    <property type="match status" value="1"/>
</dbReference>
<dbReference type="PANTHER" id="PTHR30008:SF0">
    <property type="entry name" value="EXODEOXYRIBONUCLEASE 7 LARGE SUBUNIT"/>
    <property type="match status" value="1"/>
</dbReference>
<dbReference type="Pfam" id="PF02601">
    <property type="entry name" value="Exonuc_VII_L"/>
    <property type="match status" value="1"/>
</dbReference>
<dbReference type="Pfam" id="PF13742">
    <property type="entry name" value="tRNA_anti_2"/>
    <property type="match status" value="1"/>
</dbReference>
<evidence type="ECO:0000255" key="1">
    <source>
        <dbReference type="HAMAP-Rule" id="MF_00378"/>
    </source>
</evidence>
<protein>
    <recommendedName>
        <fullName evidence="1">Exodeoxyribonuclease 7 large subunit</fullName>
        <ecNumber evidence="1">3.1.11.6</ecNumber>
    </recommendedName>
    <alternativeName>
        <fullName evidence="1">Exodeoxyribonuclease VII large subunit</fullName>
        <shortName evidence="1">Exonuclease VII large subunit</shortName>
    </alternativeName>
</protein>
<reference key="1">
    <citation type="journal article" date="2006" name="Proc. Natl. Acad. Sci. U.S.A.">
        <title>Comparative genomics of the lactic acid bacteria.</title>
        <authorList>
            <person name="Makarova K.S."/>
            <person name="Slesarev A."/>
            <person name="Wolf Y.I."/>
            <person name="Sorokin A."/>
            <person name="Mirkin B."/>
            <person name="Koonin E.V."/>
            <person name="Pavlov A."/>
            <person name="Pavlova N."/>
            <person name="Karamychev V."/>
            <person name="Polouchine N."/>
            <person name="Shakhova V."/>
            <person name="Grigoriev I."/>
            <person name="Lou Y."/>
            <person name="Rohksar D."/>
            <person name="Lucas S."/>
            <person name="Huang K."/>
            <person name="Goodstein D.M."/>
            <person name="Hawkins T."/>
            <person name="Plengvidhya V."/>
            <person name="Welker D."/>
            <person name="Hughes J."/>
            <person name="Goh Y."/>
            <person name="Benson A."/>
            <person name="Baldwin K."/>
            <person name="Lee J.-H."/>
            <person name="Diaz-Muniz I."/>
            <person name="Dosti B."/>
            <person name="Smeianov V."/>
            <person name="Wechter W."/>
            <person name="Barabote R."/>
            <person name="Lorca G."/>
            <person name="Altermann E."/>
            <person name="Barrangou R."/>
            <person name="Ganesan B."/>
            <person name="Xie Y."/>
            <person name="Rawsthorne H."/>
            <person name="Tamir D."/>
            <person name="Parker C."/>
            <person name="Breidt F."/>
            <person name="Broadbent J.R."/>
            <person name="Hutkins R."/>
            <person name="O'Sullivan D."/>
            <person name="Steele J."/>
            <person name="Unlu G."/>
            <person name="Saier M.H. Jr."/>
            <person name="Klaenhammer T."/>
            <person name="Richardson P."/>
            <person name="Kozyavkin S."/>
            <person name="Weimer B.C."/>
            <person name="Mills D.A."/>
        </authorList>
    </citation>
    <scope>NUCLEOTIDE SEQUENCE [LARGE SCALE GENOMIC DNA]</scope>
    <source>
        <strain>ATCC BAA-491 / LMD-9</strain>
    </source>
</reference>
<proteinExistence type="inferred from homology"/>
<comment type="function">
    <text evidence="1">Bidirectionally degrades single-stranded DNA into large acid-insoluble oligonucleotides, which are then degraded further into small acid-soluble oligonucleotides.</text>
</comment>
<comment type="catalytic activity">
    <reaction evidence="1">
        <text>Exonucleolytic cleavage in either 5'- to 3'- or 3'- to 5'-direction to yield nucleoside 5'-phosphates.</text>
        <dbReference type="EC" id="3.1.11.6"/>
    </reaction>
</comment>
<comment type="subunit">
    <text evidence="1">Heterooligomer composed of large and small subunits.</text>
</comment>
<comment type="subcellular location">
    <subcellularLocation>
        <location evidence="1">Cytoplasm</location>
    </subcellularLocation>
</comment>
<comment type="similarity">
    <text evidence="1">Belongs to the XseA family.</text>
</comment>
<keyword id="KW-0963">Cytoplasm</keyword>
<keyword id="KW-0269">Exonuclease</keyword>
<keyword id="KW-0378">Hydrolase</keyword>
<keyword id="KW-0540">Nuclease</keyword>
<gene>
    <name evidence="1" type="primary">xseA</name>
    <name type="ordered locus">STER_1184</name>
</gene>